<proteinExistence type="evidence at protein level"/>
<gene>
    <name evidence="5 6" type="primary">C1qb</name>
</gene>
<keyword id="KW-0106">Calcium</keyword>
<keyword id="KW-0176">Collagen</keyword>
<keyword id="KW-0180">Complement pathway</keyword>
<keyword id="KW-0903">Direct protein sequencing</keyword>
<keyword id="KW-1015">Disulfide bond</keyword>
<keyword id="KW-0325">Glycoprotein</keyword>
<keyword id="KW-0379">Hydroxylation</keyword>
<keyword id="KW-0391">Immunity</keyword>
<keyword id="KW-0399">Innate immunity</keyword>
<keyword id="KW-0479">Metal-binding</keyword>
<keyword id="KW-0873">Pyrrolidone carboxylic acid</keyword>
<keyword id="KW-1185">Reference proteome</keyword>
<keyword id="KW-0677">Repeat</keyword>
<keyword id="KW-0964">Secreted</keyword>
<keyword id="KW-0732">Signal</keyword>
<name>C1QB_RAT</name>
<sequence length="253" mass="26589">MKTQWSEILTPLLLLLLGLLHVSWAQSSCTGSPGIPGVPGIPGVPGSDGKPGTPGIKGEKGLPGLAGDHGELGEKGDAGIPGIPGKVGPKGPVGPKGAPGPPGPRGPKGGSGDYKATQKVAFSALRTVNSALRPNQAIRFEKVITNVNDNYEPRSGKFTCKVPGLYYFTYHASSRGNLCVNIVRGRDRDRMQKVLTFCDYAQNTFQVTTGGVVLKLEQEEVVHLQATDKNSLLGVEGANSIFTGFLLFPDMDV</sequence>
<comment type="function">
    <text evidence="1">Core component of the complement C1 complex, a multiprotein complex that initiates the classical pathway of the complement system, a cascade of proteins that leads to phagocytosis and breakdown of pathogens and signaling that strengthens the adaptive immune system. The classical complement pathway is initiated by the C1Q subcomplex of the C1 complex, which specifically binds IgG or IgM immunoglobulins complexed with antigens, forming antigen-antibody complexes on the surface of pathogens: C1QA, together with C1QB and C1QC, specifically recognizes and binds the Fc regions of IgG or IgM via its C1q domain. Immunoglobulin-binding activates the proenzyme C1R, which cleaves C1S, initiating the proteolytic cascade of the complement system. The C1Q subcomplex is activated by a hexamer of IgG complexed with antigens, while it is activated by a pentameric IgM. The C1Q subcomplex also recognizes and binds phosphatidylserine exposed on the surface of cells undergoing programmed cell death, possibly promoting activation of the complement system.</text>
</comment>
<comment type="activity regulation">
    <text evidence="1">The C1Q subcomplex is inhibited by sulfated molecules, such as triterpenoid sulfates, heparan sulfate, or chondroitin sulfates.</text>
</comment>
<comment type="subunit">
    <text evidence="1">Core component of the complement C1 complex, a calcium-dependent complex composed of 1 molecule of the C1Q subcomplex, 2 molecules of C1R and 2 molecules of C1S. The C1Q subcomplex is composed 18 subunits: 3 chains of C1QA, C1QB, and C1QC trimerize to form 6 collagen-like triple helices connected to six globular ligand-recognition modules (C1q domain).</text>
</comment>
<comment type="subcellular location">
    <subcellularLocation>
        <location evidence="1">Secreted</location>
    </subcellularLocation>
    <subcellularLocation>
        <location evidence="1">Cell surface</location>
    </subcellularLocation>
    <text evidence="1">Specifically binds IgG or IgM immunoglobulins complexed with antigens, forming antigen-antibody complexes on the surface of pathogens.</text>
</comment>
<comment type="tissue specificity">
    <text evidence="4">Highest levels in spleen, lung and brain. Weaker expression in kidney and liver. In the spleen, localized mainly to the red pulp, in cells mainly of monocyte-macrophage lineage. In white pulp, localized in specific dendritic cells such as those from the periarteriolar lymphatic sheath (PALS).</text>
</comment>
<comment type="domain">
    <text evidence="1">The C1q domain is the ligand-recognition domain, which specifically recognizes and binds the Fc regions of IgG or IgM immunoglobulins.</text>
</comment>
<comment type="domain">
    <text evidence="1">The collagen-like domain interacts with C1R and C1S proenzymes.</text>
</comment>
<comment type="PTM">
    <text evidence="1">Hydroxylated on lysine and proline residues. Hydroxylated lysine residues can be glycosylated. Human C1Q contains up to 68.3 hydroxylysine-galactosylglucose residues and up to 2.5 hydroxylysine-galactose per molecule. Total percentage hydroxylysine residues glycosylated is 86.4%.</text>
</comment>
<evidence type="ECO:0000250" key="1">
    <source>
        <dbReference type="UniProtKB" id="P02746"/>
    </source>
</evidence>
<evidence type="ECO:0000255" key="2">
    <source>
        <dbReference type="PROSITE-ProRule" id="PRU00368"/>
    </source>
</evidence>
<evidence type="ECO:0000256" key="3">
    <source>
        <dbReference type="SAM" id="MobiDB-lite"/>
    </source>
</evidence>
<evidence type="ECO:0000269" key="4">
    <source>
    </source>
</evidence>
<evidence type="ECO:0000303" key="5">
    <source>
    </source>
</evidence>
<evidence type="ECO:0000312" key="6">
    <source>
        <dbReference type="RGD" id="2229"/>
    </source>
</evidence>
<reference key="1">
    <citation type="journal article" date="1995" name="J. Immunol.">
        <title>Follicular dendritic cells, interdigitating cells, and cells of the monocyte-macrophage lineage are the C1q-producing sources in the spleen. Identification of specific cell types by in situ hybridization and immunohistochemical analysis.</title>
        <authorList>
            <person name="Schwaeble W."/>
            <person name="Schaefer M.K.-H."/>
            <person name="Petry F."/>
            <person name="Fink T."/>
            <person name="Knebel D."/>
            <person name="Weihe E."/>
            <person name="Loos M."/>
        </authorList>
    </citation>
    <scope>NUCLEOTIDE SEQUENCE [MRNA]</scope>
    <scope>TISSUE SPECIFICITY</scope>
    <source>
        <strain>Sprague-Dawley</strain>
        <tissue>Spleen</tissue>
    </source>
</reference>
<reference key="2">
    <citation type="journal article" date="1993" name="Mol. Immunol.">
        <title>Rapid isolation and biochemical characterization of rat C1 and C1q.</title>
        <authorList>
            <person name="Wing M.G."/>
            <person name="Seilly D.J."/>
            <person name="Bridgman D.J."/>
            <person name="Harrison R.A."/>
        </authorList>
    </citation>
    <scope>PROTEIN SEQUENCE OF 71-79 AND 141-146</scope>
</reference>
<accession>P31721</accession>
<protein>
    <recommendedName>
        <fullName>Complement C1q subcomponent subunit B</fullName>
    </recommendedName>
</protein>
<feature type="signal peptide" evidence="1">
    <location>
        <begin position="1"/>
        <end position="25"/>
    </location>
</feature>
<feature type="chain" id="PRO_0000003523" description="Complement C1q subcomponent subunit B">
    <location>
        <begin position="26"/>
        <end position="253"/>
    </location>
</feature>
<feature type="domain" description="Collagen-like">
    <location>
        <begin position="29"/>
        <end position="112"/>
    </location>
</feature>
<feature type="domain" description="C1q" evidence="2">
    <location>
        <begin position="115"/>
        <end position="253"/>
    </location>
</feature>
<feature type="region of interest" description="Disordered" evidence="3">
    <location>
        <begin position="29"/>
        <end position="114"/>
    </location>
</feature>
<feature type="compositionally biased region" description="Basic and acidic residues" evidence="3">
    <location>
        <begin position="68"/>
        <end position="77"/>
    </location>
</feature>
<feature type="compositionally biased region" description="Low complexity" evidence="3">
    <location>
        <begin position="78"/>
        <end position="96"/>
    </location>
</feature>
<feature type="binding site" evidence="1">
    <location>
        <position position="199"/>
    </location>
    <ligand>
        <name>Ca(2+)</name>
        <dbReference type="ChEBI" id="CHEBI:29108"/>
    </ligand>
</feature>
<feature type="binding site" evidence="1">
    <location>
        <position position="200"/>
    </location>
    <ligand>
        <name>Ca(2+)</name>
        <dbReference type="ChEBI" id="CHEBI:29108"/>
    </ligand>
</feature>
<feature type="binding site" evidence="1">
    <location>
        <position position="206"/>
    </location>
    <ligand>
        <name>Ca(2+)</name>
        <dbReference type="ChEBI" id="CHEBI:29108"/>
    </ligand>
</feature>
<feature type="modified residue" description="Pyrrolidone carboxylic acid" evidence="1">
    <location>
        <position position="26"/>
    </location>
</feature>
<feature type="modified residue" description="4-hydroxyproline" evidence="1">
    <location>
        <position position="33"/>
    </location>
</feature>
<feature type="modified residue" description="4-hydroxyproline" evidence="1">
    <location>
        <position position="36"/>
    </location>
</feature>
<feature type="modified residue" description="4-hydroxyproline" evidence="1">
    <location>
        <position position="39"/>
    </location>
</feature>
<feature type="modified residue" description="4-hydroxyproline" evidence="1">
    <location>
        <position position="51"/>
    </location>
</feature>
<feature type="modified residue" description="4-hydroxyproline" evidence="1">
    <location>
        <position position="54"/>
    </location>
</feature>
<feature type="modified residue" description="5-hydroxylysine" evidence="1">
    <location>
        <position position="57"/>
    </location>
</feature>
<feature type="modified residue" description="5-hydroxylysine" evidence="1">
    <location>
        <position position="60"/>
    </location>
</feature>
<feature type="modified residue" description="4-hydroxyproline" evidence="1">
    <location>
        <position position="63"/>
    </location>
</feature>
<feature type="modified residue" description="5-hydroxylysine" evidence="1">
    <location>
        <position position="75"/>
    </location>
</feature>
<feature type="modified residue" description="4-hydroxyproline" evidence="1">
    <location>
        <position position="81"/>
    </location>
</feature>
<feature type="modified residue" description="4-hydroxyproline" evidence="1">
    <location>
        <position position="84"/>
    </location>
</feature>
<feature type="modified residue" description="5-hydroxylysine" evidence="1">
    <location>
        <position position="90"/>
    </location>
</feature>
<feature type="modified residue" description="5-hydroxylysine" evidence="1">
    <location>
        <position position="96"/>
    </location>
</feature>
<feature type="modified residue" description="4-hydroxyproline" evidence="1">
    <location>
        <position position="99"/>
    </location>
</feature>
<feature type="modified residue" description="4-hydroxyproline" evidence="1">
    <location>
        <position position="102"/>
    </location>
</feature>
<feature type="modified residue" description="5-hydroxylysine" evidence="1">
    <location>
        <position position="108"/>
    </location>
</feature>
<feature type="disulfide bond" description="Interchain (with C-26 in chain A)">
    <location>
        <position position="29"/>
    </location>
</feature>
<feature type="disulfide bond" evidence="1">
    <location>
        <begin position="179"/>
        <end position="198"/>
    </location>
</feature>
<dbReference type="EMBL" id="X71127">
    <property type="protein sequence ID" value="CAA50440.1"/>
    <property type="molecule type" value="mRNA"/>
</dbReference>
<dbReference type="PIR" id="S49158">
    <property type="entry name" value="S49158"/>
</dbReference>
<dbReference type="RefSeq" id="NP_062135.1">
    <property type="nucleotide sequence ID" value="NM_019262.1"/>
</dbReference>
<dbReference type="SMR" id="P31721"/>
<dbReference type="BioGRID" id="248307">
    <property type="interactions" value="2"/>
</dbReference>
<dbReference type="FunCoup" id="P31721">
    <property type="interactions" value="13"/>
</dbReference>
<dbReference type="IntAct" id="P31721">
    <property type="interactions" value="1"/>
</dbReference>
<dbReference type="MINT" id="P31721"/>
<dbReference type="STRING" id="10116.ENSRNOP00000017060"/>
<dbReference type="iPTMnet" id="P31721"/>
<dbReference type="PhosphoSitePlus" id="P31721"/>
<dbReference type="PaxDb" id="10116-ENSRNOP00000017060"/>
<dbReference type="GeneID" id="29687"/>
<dbReference type="KEGG" id="rno:29687"/>
<dbReference type="AGR" id="RGD:2229"/>
<dbReference type="CTD" id="713"/>
<dbReference type="RGD" id="2229">
    <property type="gene designation" value="C1qb"/>
</dbReference>
<dbReference type="eggNOG" id="ENOG502RYR2">
    <property type="taxonomic scope" value="Eukaryota"/>
</dbReference>
<dbReference type="InParanoid" id="P31721"/>
<dbReference type="OrthoDB" id="8964326at2759"/>
<dbReference type="PhylomeDB" id="P31721"/>
<dbReference type="Reactome" id="R-RNO-166663">
    <property type="pathway name" value="Initial triggering of complement"/>
</dbReference>
<dbReference type="Reactome" id="R-RNO-173623">
    <property type="pathway name" value="Classical antibody-mediated complement activation"/>
</dbReference>
<dbReference type="Reactome" id="R-RNO-977606">
    <property type="pathway name" value="Regulation of Complement cascade"/>
</dbReference>
<dbReference type="PRO" id="PR:P31721"/>
<dbReference type="Proteomes" id="UP000002494">
    <property type="component" value="Unplaced"/>
</dbReference>
<dbReference type="GO" id="GO:0005581">
    <property type="term" value="C:collagen trimer"/>
    <property type="evidence" value="ECO:0007669"/>
    <property type="project" value="UniProtKB-KW"/>
</dbReference>
<dbReference type="GO" id="GO:0005602">
    <property type="term" value="C:complement component C1 complex"/>
    <property type="evidence" value="ECO:0000314"/>
    <property type="project" value="RGD"/>
</dbReference>
<dbReference type="GO" id="GO:0062167">
    <property type="term" value="C:complement component C1q complex"/>
    <property type="evidence" value="ECO:0000266"/>
    <property type="project" value="RGD"/>
</dbReference>
<dbReference type="GO" id="GO:0005576">
    <property type="term" value="C:extracellular region"/>
    <property type="evidence" value="ECO:0000266"/>
    <property type="project" value="RGD"/>
</dbReference>
<dbReference type="GO" id="GO:0098890">
    <property type="term" value="C:extrinsic component of postsynaptic membrane"/>
    <property type="evidence" value="ECO:0000266"/>
    <property type="project" value="RGD"/>
</dbReference>
<dbReference type="GO" id="GO:0098888">
    <property type="term" value="C:extrinsic component of presynaptic membrane"/>
    <property type="evidence" value="ECO:0000266"/>
    <property type="project" value="RGD"/>
</dbReference>
<dbReference type="GO" id="GO:0098978">
    <property type="term" value="C:glutamatergic synapse"/>
    <property type="evidence" value="ECO:0000266"/>
    <property type="project" value="RGD"/>
</dbReference>
<dbReference type="GO" id="GO:0098794">
    <property type="term" value="C:postsynapse"/>
    <property type="evidence" value="ECO:0000266"/>
    <property type="project" value="RGD"/>
</dbReference>
<dbReference type="GO" id="GO:0045202">
    <property type="term" value="C:synapse"/>
    <property type="evidence" value="ECO:0000314"/>
    <property type="project" value="ARUK-UCL"/>
</dbReference>
<dbReference type="GO" id="GO:0042802">
    <property type="term" value="F:identical protein binding"/>
    <property type="evidence" value="ECO:0000266"/>
    <property type="project" value="RGD"/>
</dbReference>
<dbReference type="GO" id="GO:0006958">
    <property type="term" value="P:complement activation, classical pathway"/>
    <property type="evidence" value="ECO:0000266"/>
    <property type="project" value="RGD"/>
</dbReference>
<dbReference type="GO" id="GO:0006955">
    <property type="term" value="P:immune response"/>
    <property type="evidence" value="ECO:0000304"/>
    <property type="project" value="RGD"/>
</dbReference>
<dbReference type="GO" id="GO:0045087">
    <property type="term" value="P:innate immune response"/>
    <property type="evidence" value="ECO:0007669"/>
    <property type="project" value="UniProtKB-KW"/>
</dbReference>
<dbReference type="GO" id="GO:0048839">
    <property type="term" value="P:inner ear development"/>
    <property type="evidence" value="ECO:0000266"/>
    <property type="project" value="RGD"/>
</dbReference>
<dbReference type="GO" id="GO:0051384">
    <property type="term" value="P:response to glucocorticoid"/>
    <property type="evidence" value="ECO:0000270"/>
    <property type="project" value="RGD"/>
</dbReference>
<dbReference type="GO" id="GO:0098883">
    <property type="term" value="P:synapse pruning"/>
    <property type="evidence" value="ECO:0000266"/>
    <property type="project" value="RGD"/>
</dbReference>
<dbReference type="FunFam" id="2.60.120.40:FF:000001">
    <property type="entry name" value="Complement C1q B chain"/>
    <property type="match status" value="1"/>
</dbReference>
<dbReference type="Gene3D" id="2.60.120.40">
    <property type="match status" value="1"/>
</dbReference>
<dbReference type="InterPro" id="IPR001073">
    <property type="entry name" value="C1q_dom"/>
</dbReference>
<dbReference type="InterPro" id="IPR008160">
    <property type="entry name" value="Collagen"/>
</dbReference>
<dbReference type="InterPro" id="IPR050392">
    <property type="entry name" value="Collagen/C1q_domain"/>
</dbReference>
<dbReference type="InterPro" id="IPR008983">
    <property type="entry name" value="Tumour_necrosis_fac-like_dom"/>
</dbReference>
<dbReference type="PANTHER" id="PTHR15427:SF18">
    <property type="entry name" value="COMPLEMENT C1Q SUBCOMPONENT SUBUNIT B"/>
    <property type="match status" value="1"/>
</dbReference>
<dbReference type="PANTHER" id="PTHR15427">
    <property type="entry name" value="EMILIN ELASTIN MICROFIBRIL INTERFACE-LOCATED PROTEIN ELASTIN MICROFIBRIL INTERFACER"/>
    <property type="match status" value="1"/>
</dbReference>
<dbReference type="Pfam" id="PF00386">
    <property type="entry name" value="C1q"/>
    <property type="match status" value="1"/>
</dbReference>
<dbReference type="Pfam" id="PF01391">
    <property type="entry name" value="Collagen"/>
    <property type="match status" value="2"/>
</dbReference>
<dbReference type="PRINTS" id="PR00007">
    <property type="entry name" value="COMPLEMNTC1Q"/>
</dbReference>
<dbReference type="SMART" id="SM00110">
    <property type="entry name" value="C1Q"/>
    <property type="match status" value="1"/>
</dbReference>
<dbReference type="SUPFAM" id="SSF49842">
    <property type="entry name" value="TNF-like"/>
    <property type="match status" value="1"/>
</dbReference>
<dbReference type="PROSITE" id="PS50871">
    <property type="entry name" value="C1Q"/>
    <property type="match status" value="1"/>
</dbReference>
<organism>
    <name type="scientific">Rattus norvegicus</name>
    <name type="common">Rat</name>
    <dbReference type="NCBI Taxonomy" id="10116"/>
    <lineage>
        <taxon>Eukaryota</taxon>
        <taxon>Metazoa</taxon>
        <taxon>Chordata</taxon>
        <taxon>Craniata</taxon>
        <taxon>Vertebrata</taxon>
        <taxon>Euteleostomi</taxon>
        <taxon>Mammalia</taxon>
        <taxon>Eutheria</taxon>
        <taxon>Euarchontoglires</taxon>
        <taxon>Glires</taxon>
        <taxon>Rodentia</taxon>
        <taxon>Myomorpha</taxon>
        <taxon>Muroidea</taxon>
        <taxon>Muridae</taxon>
        <taxon>Murinae</taxon>
        <taxon>Rattus</taxon>
    </lineage>
</organism>